<protein>
    <recommendedName>
        <fullName evidence="1">Small ribosomal subunit protein bS16</fullName>
    </recommendedName>
    <alternativeName>
        <fullName evidence="2">30S ribosomal protein S16</fullName>
    </alternativeName>
</protein>
<name>RS16_NITV9</name>
<keyword id="KW-0687">Ribonucleoprotein</keyword>
<keyword id="KW-0689">Ribosomal protein</keyword>
<accession>B8DRI7</accession>
<comment type="similarity">
    <text evidence="1">Belongs to the bacterial ribosomal protein bS16 family.</text>
</comment>
<sequence>MSVKLRLARMGNKKRAFYRIVAVNSAARRDGRPLEFLGFYNPMVNPAEVKIDTAKVQKWLDQGAEPTDTVRTLLKKQAG</sequence>
<evidence type="ECO:0000255" key="1">
    <source>
        <dbReference type="HAMAP-Rule" id="MF_00385"/>
    </source>
</evidence>
<evidence type="ECO:0000305" key="2"/>
<proteinExistence type="inferred from homology"/>
<dbReference type="EMBL" id="CP001197">
    <property type="protein sequence ID" value="ACL09824.1"/>
    <property type="molecule type" value="Genomic_DNA"/>
</dbReference>
<dbReference type="SMR" id="B8DRI7"/>
<dbReference type="STRING" id="883.DvMF_2887"/>
<dbReference type="KEGG" id="dvm:DvMF_2887"/>
<dbReference type="eggNOG" id="COG0228">
    <property type="taxonomic scope" value="Bacteria"/>
</dbReference>
<dbReference type="HOGENOM" id="CLU_100590_5_0_7"/>
<dbReference type="OrthoDB" id="9807878at2"/>
<dbReference type="GO" id="GO:0005737">
    <property type="term" value="C:cytoplasm"/>
    <property type="evidence" value="ECO:0007669"/>
    <property type="project" value="UniProtKB-ARBA"/>
</dbReference>
<dbReference type="GO" id="GO:0015935">
    <property type="term" value="C:small ribosomal subunit"/>
    <property type="evidence" value="ECO:0007669"/>
    <property type="project" value="TreeGrafter"/>
</dbReference>
<dbReference type="GO" id="GO:0003735">
    <property type="term" value="F:structural constituent of ribosome"/>
    <property type="evidence" value="ECO:0007669"/>
    <property type="project" value="InterPro"/>
</dbReference>
<dbReference type="GO" id="GO:0006412">
    <property type="term" value="P:translation"/>
    <property type="evidence" value="ECO:0007669"/>
    <property type="project" value="UniProtKB-UniRule"/>
</dbReference>
<dbReference type="Gene3D" id="3.30.1320.10">
    <property type="match status" value="1"/>
</dbReference>
<dbReference type="HAMAP" id="MF_00385">
    <property type="entry name" value="Ribosomal_bS16"/>
    <property type="match status" value="1"/>
</dbReference>
<dbReference type="InterPro" id="IPR000307">
    <property type="entry name" value="Ribosomal_bS16"/>
</dbReference>
<dbReference type="InterPro" id="IPR023803">
    <property type="entry name" value="Ribosomal_bS16_dom_sf"/>
</dbReference>
<dbReference type="NCBIfam" id="TIGR00002">
    <property type="entry name" value="S16"/>
    <property type="match status" value="1"/>
</dbReference>
<dbReference type="PANTHER" id="PTHR12919">
    <property type="entry name" value="30S RIBOSOMAL PROTEIN S16"/>
    <property type="match status" value="1"/>
</dbReference>
<dbReference type="PANTHER" id="PTHR12919:SF20">
    <property type="entry name" value="SMALL RIBOSOMAL SUBUNIT PROTEIN BS16M"/>
    <property type="match status" value="1"/>
</dbReference>
<dbReference type="Pfam" id="PF00886">
    <property type="entry name" value="Ribosomal_S16"/>
    <property type="match status" value="1"/>
</dbReference>
<dbReference type="SUPFAM" id="SSF54565">
    <property type="entry name" value="Ribosomal protein S16"/>
    <property type="match status" value="1"/>
</dbReference>
<gene>
    <name evidence="1" type="primary">rpsP</name>
    <name type="ordered locus">DvMF_2887</name>
</gene>
<reference key="1">
    <citation type="submission" date="2008-10" db="EMBL/GenBank/DDBJ databases">
        <title>Complete sequence of Desulfovibrio vulgaris str. 'Miyazaki F'.</title>
        <authorList>
            <person name="Lucas S."/>
            <person name="Copeland A."/>
            <person name="Lapidus A."/>
            <person name="Glavina del Rio T."/>
            <person name="Dalin E."/>
            <person name="Tice H."/>
            <person name="Bruce D."/>
            <person name="Goodwin L."/>
            <person name="Pitluck S."/>
            <person name="Sims D."/>
            <person name="Brettin T."/>
            <person name="Detter J.C."/>
            <person name="Han C."/>
            <person name="Larimer F."/>
            <person name="Land M."/>
            <person name="Hauser L."/>
            <person name="Kyrpides N."/>
            <person name="Mikhailova N."/>
            <person name="Hazen T.C."/>
            <person name="Richardson P."/>
        </authorList>
    </citation>
    <scope>NUCLEOTIDE SEQUENCE [LARGE SCALE GENOMIC DNA]</scope>
    <source>
        <strain>DSM 19637 / Miyazaki F</strain>
    </source>
</reference>
<organism>
    <name type="scientific">Nitratidesulfovibrio vulgaris (strain DSM 19637 / Miyazaki F)</name>
    <name type="common">Desulfovibrio vulgaris</name>
    <dbReference type="NCBI Taxonomy" id="883"/>
    <lineage>
        <taxon>Bacteria</taxon>
        <taxon>Pseudomonadati</taxon>
        <taxon>Thermodesulfobacteriota</taxon>
        <taxon>Desulfovibrionia</taxon>
        <taxon>Desulfovibrionales</taxon>
        <taxon>Desulfovibrionaceae</taxon>
        <taxon>Nitratidesulfovibrio</taxon>
    </lineage>
</organism>
<feature type="chain" id="PRO_1000196389" description="Small ribosomal subunit protein bS16">
    <location>
        <begin position="1"/>
        <end position="79"/>
    </location>
</feature>